<sequence>MARLAGVDLPREKRMEIALTYIYGIGRTRSKEILDATGVSPDLRSKDLSDEDLAKLREYIEESLKVEGDLRREVQADIRRKIEIGCYQGLRHRRGLPVRGQRTKTNARTRKGPKRTIAGKKKAK</sequence>
<reference key="1">
    <citation type="journal article" date="2006" name="Proc. Natl. Acad. Sci. U.S.A.">
        <title>The complete genome of Rhodococcus sp. RHA1 provides insights into a catabolic powerhouse.</title>
        <authorList>
            <person name="McLeod M.P."/>
            <person name="Warren R.L."/>
            <person name="Hsiao W.W.L."/>
            <person name="Araki N."/>
            <person name="Myhre M."/>
            <person name="Fernandes C."/>
            <person name="Miyazawa D."/>
            <person name="Wong W."/>
            <person name="Lillquist A.L."/>
            <person name="Wang D."/>
            <person name="Dosanjh M."/>
            <person name="Hara H."/>
            <person name="Petrescu A."/>
            <person name="Morin R.D."/>
            <person name="Yang G."/>
            <person name="Stott J.M."/>
            <person name="Schein J.E."/>
            <person name="Shin H."/>
            <person name="Smailus D."/>
            <person name="Siddiqui A.S."/>
            <person name="Marra M.A."/>
            <person name="Jones S.J.M."/>
            <person name="Holt R."/>
            <person name="Brinkman F.S.L."/>
            <person name="Miyauchi K."/>
            <person name="Fukuda M."/>
            <person name="Davies J.E."/>
            <person name="Mohn W.W."/>
            <person name="Eltis L.D."/>
        </authorList>
    </citation>
    <scope>NUCLEOTIDE SEQUENCE [LARGE SCALE GENOMIC DNA]</scope>
    <source>
        <strain>RHA1</strain>
    </source>
</reference>
<keyword id="KW-0687">Ribonucleoprotein</keyword>
<keyword id="KW-0689">Ribosomal protein</keyword>
<keyword id="KW-0694">RNA-binding</keyword>
<keyword id="KW-0699">rRNA-binding</keyword>
<keyword id="KW-0820">tRNA-binding</keyword>
<dbReference type="EMBL" id="CP000431">
    <property type="protein sequence ID" value="ABG97936.1"/>
    <property type="molecule type" value="Genomic_DNA"/>
</dbReference>
<dbReference type="RefSeq" id="WP_005239677.1">
    <property type="nucleotide sequence ID" value="NC_008268.1"/>
</dbReference>
<dbReference type="SMR" id="Q0S3F0"/>
<dbReference type="GeneID" id="69890542"/>
<dbReference type="KEGG" id="rha:RHA1_ro06159"/>
<dbReference type="eggNOG" id="COG0099">
    <property type="taxonomic scope" value="Bacteria"/>
</dbReference>
<dbReference type="HOGENOM" id="CLU_103849_1_2_11"/>
<dbReference type="OrthoDB" id="9803610at2"/>
<dbReference type="Proteomes" id="UP000008710">
    <property type="component" value="Chromosome"/>
</dbReference>
<dbReference type="GO" id="GO:0005829">
    <property type="term" value="C:cytosol"/>
    <property type="evidence" value="ECO:0007669"/>
    <property type="project" value="TreeGrafter"/>
</dbReference>
<dbReference type="GO" id="GO:0015935">
    <property type="term" value="C:small ribosomal subunit"/>
    <property type="evidence" value="ECO:0007669"/>
    <property type="project" value="TreeGrafter"/>
</dbReference>
<dbReference type="GO" id="GO:0019843">
    <property type="term" value="F:rRNA binding"/>
    <property type="evidence" value="ECO:0007669"/>
    <property type="project" value="UniProtKB-UniRule"/>
</dbReference>
<dbReference type="GO" id="GO:0003735">
    <property type="term" value="F:structural constituent of ribosome"/>
    <property type="evidence" value="ECO:0007669"/>
    <property type="project" value="InterPro"/>
</dbReference>
<dbReference type="GO" id="GO:0000049">
    <property type="term" value="F:tRNA binding"/>
    <property type="evidence" value="ECO:0007669"/>
    <property type="project" value="UniProtKB-UniRule"/>
</dbReference>
<dbReference type="GO" id="GO:0006412">
    <property type="term" value="P:translation"/>
    <property type="evidence" value="ECO:0007669"/>
    <property type="project" value="UniProtKB-UniRule"/>
</dbReference>
<dbReference type="FunFam" id="1.10.8.50:FF:000001">
    <property type="entry name" value="30S ribosomal protein S13"/>
    <property type="match status" value="1"/>
</dbReference>
<dbReference type="FunFam" id="4.10.910.10:FF:000001">
    <property type="entry name" value="30S ribosomal protein S13"/>
    <property type="match status" value="1"/>
</dbReference>
<dbReference type="Gene3D" id="1.10.8.50">
    <property type="match status" value="1"/>
</dbReference>
<dbReference type="Gene3D" id="4.10.910.10">
    <property type="entry name" value="30s ribosomal protein s13, domain 2"/>
    <property type="match status" value="1"/>
</dbReference>
<dbReference type="HAMAP" id="MF_01315">
    <property type="entry name" value="Ribosomal_uS13"/>
    <property type="match status" value="1"/>
</dbReference>
<dbReference type="InterPro" id="IPR027437">
    <property type="entry name" value="Rbsml_uS13_C"/>
</dbReference>
<dbReference type="InterPro" id="IPR001892">
    <property type="entry name" value="Ribosomal_uS13"/>
</dbReference>
<dbReference type="InterPro" id="IPR010979">
    <property type="entry name" value="Ribosomal_uS13-like_H2TH"/>
</dbReference>
<dbReference type="InterPro" id="IPR019980">
    <property type="entry name" value="Ribosomal_uS13_bac-type"/>
</dbReference>
<dbReference type="InterPro" id="IPR018269">
    <property type="entry name" value="Ribosomal_uS13_CS"/>
</dbReference>
<dbReference type="NCBIfam" id="TIGR03631">
    <property type="entry name" value="uS13_bact"/>
    <property type="match status" value="1"/>
</dbReference>
<dbReference type="PANTHER" id="PTHR10871">
    <property type="entry name" value="30S RIBOSOMAL PROTEIN S13/40S RIBOSOMAL PROTEIN S18"/>
    <property type="match status" value="1"/>
</dbReference>
<dbReference type="PANTHER" id="PTHR10871:SF1">
    <property type="entry name" value="SMALL RIBOSOMAL SUBUNIT PROTEIN US13M"/>
    <property type="match status" value="1"/>
</dbReference>
<dbReference type="Pfam" id="PF00416">
    <property type="entry name" value="Ribosomal_S13"/>
    <property type="match status" value="1"/>
</dbReference>
<dbReference type="PIRSF" id="PIRSF002134">
    <property type="entry name" value="Ribosomal_S13"/>
    <property type="match status" value="1"/>
</dbReference>
<dbReference type="SUPFAM" id="SSF46946">
    <property type="entry name" value="S13-like H2TH domain"/>
    <property type="match status" value="1"/>
</dbReference>
<dbReference type="PROSITE" id="PS00646">
    <property type="entry name" value="RIBOSOMAL_S13_1"/>
    <property type="match status" value="1"/>
</dbReference>
<dbReference type="PROSITE" id="PS50159">
    <property type="entry name" value="RIBOSOMAL_S13_2"/>
    <property type="match status" value="1"/>
</dbReference>
<organism>
    <name type="scientific">Rhodococcus jostii (strain RHA1)</name>
    <dbReference type="NCBI Taxonomy" id="101510"/>
    <lineage>
        <taxon>Bacteria</taxon>
        <taxon>Bacillati</taxon>
        <taxon>Actinomycetota</taxon>
        <taxon>Actinomycetes</taxon>
        <taxon>Mycobacteriales</taxon>
        <taxon>Nocardiaceae</taxon>
        <taxon>Rhodococcus</taxon>
    </lineage>
</organism>
<accession>Q0S3F0</accession>
<proteinExistence type="inferred from homology"/>
<comment type="function">
    <text evidence="1">Located at the top of the head of the 30S subunit, it contacts several helices of the 16S rRNA. In the 70S ribosome it contacts the 23S rRNA (bridge B1a) and protein L5 of the 50S subunit (bridge B1b), connecting the 2 subunits; these bridges are implicated in subunit movement. Contacts the tRNAs in the A and P-sites.</text>
</comment>
<comment type="subunit">
    <text evidence="1">Part of the 30S ribosomal subunit. Forms a loose heterodimer with protein S19. Forms two bridges to the 50S subunit in the 70S ribosome.</text>
</comment>
<comment type="similarity">
    <text evidence="1">Belongs to the universal ribosomal protein uS13 family.</text>
</comment>
<name>RS13_RHOJR</name>
<evidence type="ECO:0000255" key="1">
    <source>
        <dbReference type="HAMAP-Rule" id="MF_01315"/>
    </source>
</evidence>
<evidence type="ECO:0000256" key="2">
    <source>
        <dbReference type="SAM" id="MobiDB-lite"/>
    </source>
</evidence>
<evidence type="ECO:0000305" key="3"/>
<protein>
    <recommendedName>
        <fullName evidence="1">Small ribosomal subunit protein uS13</fullName>
    </recommendedName>
    <alternativeName>
        <fullName evidence="3">30S ribosomal protein S13</fullName>
    </alternativeName>
</protein>
<feature type="chain" id="PRO_0000306690" description="Small ribosomal subunit protein uS13">
    <location>
        <begin position="1"/>
        <end position="124"/>
    </location>
</feature>
<feature type="region of interest" description="Disordered" evidence="2">
    <location>
        <begin position="95"/>
        <end position="124"/>
    </location>
</feature>
<gene>
    <name evidence="1" type="primary">rpsM</name>
    <name type="ordered locus">RHA1_ro06159</name>
</gene>